<gene>
    <name type="primary">yeaO</name>
    <name type="ordered locus">b1792</name>
    <name type="ordered locus">JW1781</name>
</gene>
<proteinExistence type="predicted"/>
<organism>
    <name type="scientific">Escherichia coli (strain K12)</name>
    <dbReference type="NCBI Taxonomy" id="83333"/>
    <lineage>
        <taxon>Bacteria</taxon>
        <taxon>Pseudomonadati</taxon>
        <taxon>Pseudomonadota</taxon>
        <taxon>Gammaproteobacteria</taxon>
        <taxon>Enterobacterales</taxon>
        <taxon>Enterobacteriaceae</taxon>
        <taxon>Escherichia</taxon>
    </lineage>
</organism>
<feature type="chain" id="PRO_0000169023" description="Uncharacterized protein YeaO">
    <location>
        <begin position="1"/>
        <end position="115"/>
    </location>
</feature>
<reference key="1">
    <citation type="journal article" date="1997" name="Science">
        <title>The complete genome sequence of Escherichia coli K-12.</title>
        <authorList>
            <person name="Blattner F.R."/>
            <person name="Plunkett G. III"/>
            <person name="Bloch C.A."/>
            <person name="Perna N.T."/>
            <person name="Burland V."/>
            <person name="Riley M."/>
            <person name="Collado-Vides J."/>
            <person name="Glasner J.D."/>
            <person name="Rode C.K."/>
            <person name="Mayhew G.F."/>
            <person name="Gregor J."/>
            <person name="Davis N.W."/>
            <person name="Kirkpatrick H.A."/>
            <person name="Goeden M.A."/>
            <person name="Rose D.J."/>
            <person name="Mau B."/>
            <person name="Shao Y."/>
        </authorList>
    </citation>
    <scope>NUCLEOTIDE SEQUENCE [LARGE SCALE GENOMIC DNA]</scope>
    <source>
        <strain>K12 / MG1655 / ATCC 47076</strain>
    </source>
</reference>
<reference key="2">
    <citation type="journal article" date="2006" name="Mol. Syst. Biol.">
        <title>Highly accurate genome sequences of Escherichia coli K-12 strains MG1655 and W3110.</title>
        <authorList>
            <person name="Hayashi K."/>
            <person name="Morooka N."/>
            <person name="Yamamoto Y."/>
            <person name="Fujita K."/>
            <person name="Isono K."/>
            <person name="Choi S."/>
            <person name="Ohtsubo E."/>
            <person name="Baba T."/>
            <person name="Wanner B.L."/>
            <person name="Mori H."/>
            <person name="Horiuchi T."/>
        </authorList>
    </citation>
    <scope>NUCLEOTIDE SEQUENCE [LARGE SCALE GENOMIC DNA]</scope>
    <source>
        <strain>K12 / W3110 / ATCC 27325 / DSM 5911</strain>
    </source>
</reference>
<sequence>MNIQCKRVYDPAEQSDGYRILVDRLWPRGIKKTDLALDEWDKEITPSTELRKAFHGEVVDYATFREQYLAELAQHEQEGKRLADIAKKQPLTLLYSAKNTTQNHALVLADWLRSL</sequence>
<dbReference type="EMBL" id="U00096">
    <property type="protein sequence ID" value="AAC74862.2"/>
    <property type="molecule type" value="Genomic_DNA"/>
</dbReference>
<dbReference type="EMBL" id="AP009048">
    <property type="protein sequence ID" value="BAE76529.1"/>
    <property type="molecule type" value="Genomic_DNA"/>
</dbReference>
<dbReference type="PIR" id="H64939">
    <property type="entry name" value="H64939"/>
</dbReference>
<dbReference type="RefSeq" id="NP_416306.2">
    <property type="nucleotide sequence ID" value="NC_000913.3"/>
</dbReference>
<dbReference type="RefSeq" id="WP_001326526.1">
    <property type="nucleotide sequence ID" value="NZ_SSZK01000001.1"/>
</dbReference>
<dbReference type="SMR" id="P76243"/>
<dbReference type="BioGRID" id="4260328">
    <property type="interactions" value="23"/>
</dbReference>
<dbReference type="DIP" id="DIP-11794N"/>
<dbReference type="FunCoup" id="P76243">
    <property type="interactions" value="51"/>
</dbReference>
<dbReference type="IntAct" id="P76243">
    <property type="interactions" value="11"/>
</dbReference>
<dbReference type="STRING" id="511145.b1792"/>
<dbReference type="jPOST" id="P76243"/>
<dbReference type="PaxDb" id="511145-b1792"/>
<dbReference type="EnsemblBacteria" id="AAC74862">
    <property type="protein sequence ID" value="AAC74862"/>
    <property type="gene ID" value="b1792"/>
</dbReference>
<dbReference type="GeneID" id="945675"/>
<dbReference type="KEGG" id="ecj:JW1781"/>
<dbReference type="KEGG" id="eco:b1792"/>
<dbReference type="KEGG" id="ecoc:C3026_10215"/>
<dbReference type="PATRIC" id="fig|511145.12.peg.1866"/>
<dbReference type="EchoBASE" id="EB3274"/>
<dbReference type="eggNOG" id="COG3189">
    <property type="taxonomic scope" value="Bacteria"/>
</dbReference>
<dbReference type="HOGENOM" id="CLU_137928_1_0_6"/>
<dbReference type="InParanoid" id="P76243"/>
<dbReference type="OMA" id="RIYDHEQ"/>
<dbReference type="OrthoDB" id="9790745at2"/>
<dbReference type="PhylomeDB" id="P76243"/>
<dbReference type="BioCyc" id="EcoCyc:G6978-MONOMER"/>
<dbReference type="PRO" id="PR:P76243"/>
<dbReference type="Proteomes" id="UP000000625">
    <property type="component" value="Chromosome"/>
</dbReference>
<dbReference type="InterPro" id="IPR052552">
    <property type="entry name" value="YeaO-like"/>
</dbReference>
<dbReference type="PANTHER" id="PTHR36849:SF1">
    <property type="entry name" value="CYTOPLASMIC PROTEIN"/>
    <property type="match status" value="1"/>
</dbReference>
<dbReference type="PANTHER" id="PTHR36849">
    <property type="entry name" value="CYTOPLASMIC PROTEIN-RELATED"/>
    <property type="match status" value="1"/>
</dbReference>
<dbReference type="Pfam" id="PF22752">
    <property type="entry name" value="DUF488-N3i"/>
    <property type="match status" value="1"/>
</dbReference>
<comment type="similarity">
    <text evidence="1">To M.tuberculosis Rv3073c.</text>
</comment>
<evidence type="ECO:0000305" key="1"/>
<accession>P76243</accession>
<accession>Q2MB27</accession>
<protein>
    <recommendedName>
        <fullName>Uncharacterized protein YeaO</fullName>
    </recommendedName>
</protein>
<name>YEAO_ECOLI</name>
<keyword id="KW-1185">Reference proteome</keyword>